<accession>P84701</accession>
<organism>
    <name type="scientific">Conus mus</name>
    <name type="common">Mouse cone</name>
    <dbReference type="NCBI Taxonomy" id="257335"/>
    <lineage>
        <taxon>Eukaryota</taxon>
        <taxon>Metazoa</taxon>
        <taxon>Spiralia</taxon>
        <taxon>Lophotrochozoa</taxon>
        <taxon>Mollusca</taxon>
        <taxon>Gastropoda</taxon>
        <taxon>Caenogastropoda</taxon>
        <taxon>Neogastropoda</taxon>
        <taxon>Conoidea</taxon>
        <taxon>Conidae</taxon>
        <taxon>Conus</taxon>
        <taxon>Monteiroconus</taxon>
    </lineage>
</organism>
<keyword id="KW-0208">D-amino acid</keyword>
<keyword id="KW-0903">Direct protein sequencing</keyword>
<keyword id="KW-0379">Hydroxylation</keyword>
<keyword id="KW-0528">Neurotoxin</keyword>
<keyword id="KW-0964">Secreted</keyword>
<keyword id="KW-0800">Toxin</keyword>
<name>CONO_CONMU</name>
<dbReference type="ConoServer" id="2481">
    <property type="toxin name" value="Conophan-mus-V"/>
</dbReference>
<dbReference type="GO" id="GO:0005576">
    <property type="term" value="C:extracellular region"/>
    <property type="evidence" value="ECO:0000314"/>
    <property type="project" value="UniProtKB"/>
</dbReference>
<dbReference type="GO" id="GO:0090729">
    <property type="term" value="F:toxin activity"/>
    <property type="evidence" value="ECO:0007669"/>
    <property type="project" value="UniProtKB-KW"/>
</dbReference>
<reference key="1">
    <citation type="journal article" date="2005" name="J. Am. Chem. Soc.">
        <title>Polypeptide chains containing D-gamma-hydroxyvaline.</title>
        <authorList>
            <person name="Pisarewicz K."/>
            <person name="Mora D."/>
            <person name="Pflueger F.C."/>
            <person name="Fields G.B."/>
            <person name="Mari F."/>
        </authorList>
    </citation>
    <scope>PROTEIN SEQUENCE</scope>
    <scope>SUBCELLULAR LOCATION</scope>
    <scope>TISSUE SPECIFICITY</scope>
    <scope>HYDROXYLATION AT PRO-2 AND VAL-6</scope>
    <scope>D-AMINO ACID AT VAL-6</scope>
    <scope>MASS SPECTROMETRY</scope>
    <source>
        <tissue>Venom</tissue>
    </source>
</reference>
<evidence type="ECO:0000269" key="1">
    <source>
    </source>
</evidence>
<evidence type="ECO:0000303" key="2">
    <source>
    </source>
</evidence>
<evidence type="ECO:0000305" key="3"/>
<protein>
    <recommendedName>
        <fullName evidence="2">Conophan mus-V</fullName>
    </recommendedName>
    <alternativeName>
        <fullName evidence="2">Gamma-hydroxyconophan mus-V*</fullName>
    </alternativeName>
</protein>
<comment type="function">
    <text>May act as a neurotoxin.</text>
</comment>
<comment type="subcellular location">
    <subcellularLocation>
        <location evidence="1">Secreted</location>
    </subcellularLocation>
</comment>
<comment type="tissue specificity">
    <text evidence="1">Expressed by the venom duct.</text>
</comment>
<comment type="PTM">
    <text evidence="1">Occurs in 2 forms which differ in the post-translational modification of Val-6. In the form conophan mus-V, Val-6 is D-valine. In the form gamma-hydroxyconophan mus-V*, Val-6 is D-4-hydroxyvaline. Both diastereomeric forms of D-hydroxyvaline may be produced.</text>
</comment>
<comment type="mass spectrometry" mass="863.3" error="0.1" method="Electrospray" evidence="1">
    <text>Form conophan mus-V.</text>
</comment>
<comment type="mass spectrometry" mass="879.3" error="0.1" method="Electrospray" evidence="1">
    <text>Form gamma-hydroxyconophan gld-V*.</text>
</comment>
<comment type="miscellaneous">
    <text evidence="3">The mature peptide does not contain cysteine residue.</text>
</comment>
<comment type="similarity">
    <text evidence="3">Belongs to the conophan family.</text>
</comment>
<feature type="peptide" id="PRO_0000044125" description="Conophan mus-V" evidence="1">
    <location>
        <begin position="1"/>
        <end position="8"/>
    </location>
</feature>
<feature type="modified residue" description="4-hydroxyproline" evidence="1">
    <location>
        <position position="2"/>
    </location>
</feature>
<feature type="modified residue" description="D-4-hydroxyvaline; in form gamma-hydroxyconophan mus-V*" evidence="1">
    <location>
        <position position="6"/>
    </location>
</feature>
<feature type="modified residue" description="D-valine; in form conophan mus-V" evidence="1">
    <location>
        <position position="6"/>
    </location>
</feature>
<sequence length="8" mass="847">SPANSVWS</sequence>
<proteinExistence type="evidence at protein level"/>